<keyword id="KW-0378">Hydrolase</keyword>
<keyword id="KW-0460">Magnesium</keyword>
<keyword id="KW-0479">Metal-binding</keyword>
<sequence length="177" mass="21178">MKLPKEGDFITIQSYKHDGSLHRTWRDTMVLKTTENALIGVNDHTLVTESDGRRWVTREPAIVYFHKKYWFNIIAMIRDNGVSYYCNLASPYMMDTEALKYIDYDLDVKVFADGEKRLLDVDEYEIHKKEMQYSADMDFILKENVKILVDWINHEKGPFSKAYITIWYKRYLELKNR</sequence>
<proteinExistence type="inferred from homology"/>
<reference key="1">
    <citation type="journal article" date="2007" name="J. Bacteriol.">
        <title>Complete genome of acute rheumatic fever-associated serotype M5 Streptococcus pyogenes strain Manfredo.</title>
        <authorList>
            <person name="Holden M.T.G."/>
            <person name="Scott A."/>
            <person name="Cherevach I."/>
            <person name="Chillingworth T."/>
            <person name="Churcher C."/>
            <person name="Cronin A."/>
            <person name="Dowd L."/>
            <person name="Feltwell T."/>
            <person name="Hamlin N."/>
            <person name="Holroyd S."/>
            <person name="Jagels K."/>
            <person name="Moule S."/>
            <person name="Mungall K."/>
            <person name="Quail M.A."/>
            <person name="Price C."/>
            <person name="Rabbinowitsch E."/>
            <person name="Sharp S."/>
            <person name="Skelton J."/>
            <person name="Whitehead S."/>
            <person name="Barrell B.G."/>
            <person name="Kehoe M."/>
            <person name="Parkhill J."/>
        </authorList>
    </citation>
    <scope>NUCLEOTIDE SEQUENCE [LARGE SCALE GENOMIC DNA]</scope>
    <source>
        <strain>Manfredo</strain>
    </source>
</reference>
<accession>A2RD86</accession>
<protein>
    <recommendedName>
        <fullName evidence="1">Nucleoside triphosphate/diphosphate phosphatase</fullName>
        <ecNumber evidence="1">3.6.1.15</ecNumber>
        <ecNumber evidence="1">3.6.1.6</ecNumber>
    </recommendedName>
</protein>
<name>NTDP_STRPG</name>
<comment type="function">
    <text evidence="1">Has nucleoside phosphatase activity towards nucleoside triphosphates and nucleoside diphosphates.</text>
</comment>
<comment type="catalytic activity">
    <reaction evidence="1">
        <text>a ribonucleoside 5'-triphosphate + H2O = a ribonucleoside 5'-diphosphate + phosphate + H(+)</text>
        <dbReference type="Rhea" id="RHEA:23680"/>
        <dbReference type="ChEBI" id="CHEBI:15377"/>
        <dbReference type="ChEBI" id="CHEBI:15378"/>
        <dbReference type="ChEBI" id="CHEBI:43474"/>
        <dbReference type="ChEBI" id="CHEBI:57930"/>
        <dbReference type="ChEBI" id="CHEBI:61557"/>
        <dbReference type="EC" id="3.6.1.15"/>
    </reaction>
</comment>
<comment type="catalytic activity">
    <reaction evidence="1">
        <text>a ribonucleoside 5'-diphosphate + H2O = a ribonucleoside 5'-phosphate + phosphate + H(+)</text>
        <dbReference type="Rhea" id="RHEA:36799"/>
        <dbReference type="ChEBI" id="CHEBI:15377"/>
        <dbReference type="ChEBI" id="CHEBI:15378"/>
        <dbReference type="ChEBI" id="CHEBI:43474"/>
        <dbReference type="ChEBI" id="CHEBI:57930"/>
        <dbReference type="ChEBI" id="CHEBI:58043"/>
        <dbReference type="EC" id="3.6.1.6"/>
    </reaction>
</comment>
<comment type="cofactor">
    <cofactor evidence="1">
        <name>Mg(2+)</name>
        <dbReference type="ChEBI" id="CHEBI:18420"/>
    </cofactor>
</comment>
<comment type="similarity">
    <text evidence="1">Belongs to the Ntdp family.</text>
</comment>
<organism>
    <name type="scientific">Streptococcus pyogenes serotype M5 (strain Manfredo)</name>
    <dbReference type="NCBI Taxonomy" id="160491"/>
    <lineage>
        <taxon>Bacteria</taxon>
        <taxon>Bacillati</taxon>
        <taxon>Bacillota</taxon>
        <taxon>Bacilli</taxon>
        <taxon>Lactobacillales</taxon>
        <taxon>Streptococcaceae</taxon>
        <taxon>Streptococcus</taxon>
    </lineage>
</organism>
<dbReference type="EC" id="3.6.1.15" evidence="1"/>
<dbReference type="EC" id="3.6.1.6" evidence="1"/>
<dbReference type="EMBL" id="AM295007">
    <property type="protein sequence ID" value="CAM29811.1"/>
    <property type="molecule type" value="Genomic_DNA"/>
</dbReference>
<dbReference type="RefSeq" id="WP_002983693.1">
    <property type="nucleotide sequence ID" value="NC_009332.1"/>
</dbReference>
<dbReference type="SMR" id="A2RD86"/>
<dbReference type="KEGG" id="spf:SpyM50469"/>
<dbReference type="HOGENOM" id="CLU_109787_1_0_9"/>
<dbReference type="GO" id="GO:0000287">
    <property type="term" value="F:magnesium ion binding"/>
    <property type="evidence" value="ECO:0007669"/>
    <property type="project" value="UniProtKB-UniRule"/>
</dbReference>
<dbReference type="GO" id="GO:0017110">
    <property type="term" value="F:nucleoside diphosphate phosphatase activity"/>
    <property type="evidence" value="ECO:0007669"/>
    <property type="project" value="UniProtKB-UniRule"/>
</dbReference>
<dbReference type="GO" id="GO:0017111">
    <property type="term" value="F:ribonucleoside triphosphate phosphatase activity"/>
    <property type="evidence" value="ECO:0007669"/>
    <property type="project" value="UniProtKB-UniRule"/>
</dbReference>
<dbReference type="Gene3D" id="2.40.380.10">
    <property type="entry name" value="FomD-like"/>
    <property type="match status" value="1"/>
</dbReference>
<dbReference type="HAMAP" id="MF_01568">
    <property type="entry name" value="Ntdp"/>
    <property type="match status" value="1"/>
</dbReference>
<dbReference type="InterPro" id="IPR007295">
    <property type="entry name" value="DUF402"/>
</dbReference>
<dbReference type="InterPro" id="IPR035930">
    <property type="entry name" value="FomD-like_sf"/>
</dbReference>
<dbReference type="InterPro" id="IPR050212">
    <property type="entry name" value="Ntdp-like"/>
</dbReference>
<dbReference type="InterPro" id="IPR016882">
    <property type="entry name" value="SA1684"/>
</dbReference>
<dbReference type="NCBIfam" id="NF010183">
    <property type="entry name" value="PRK13662.1"/>
    <property type="match status" value="1"/>
</dbReference>
<dbReference type="PANTHER" id="PTHR39159">
    <property type="match status" value="1"/>
</dbReference>
<dbReference type="PANTHER" id="PTHR39159:SF1">
    <property type="entry name" value="UPF0374 PROTEIN YGAC"/>
    <property type="match status" value="1"/>
</dbReference>
<dbReference type="Pfam" id="PF04167">
    <property type="entry name" value="DUF402"/>
    <property type="match status" value="1"/>
</dbReference>
<dbReference type="PIRSF" id="PIRSF028345">
    <property type="entry name" value="UCP028345"/>
    <property type="match status" value="1"/>
</dbReference>
<dbReference type="SUPFAM" id="SSF159234">
    <property type="entry name" value="FomD-like"/>
    <property type="match status" value="1"/>
</dbReference>
<evidence type="ECO:0000255" key="1">
    <source>
        <dbReference type="HAMAP-Rule" id="MF_01568"/>
    </source>
</evidence>
<gene>
    <name type="ordered locus">SpyM50469</name>
</gene>
<feature type="chain" id="PRO_1000069110" description="Nucleoside triphosphate/diphosphate phosphatase">
    <location>
        <begin position="1"/>
        <end position="177"/>
    </location>
</feature>
<feature type="active site" description="Proton donor" evidence="1">
    <location>
        <position position="23"/>
    </location>
</feature>
<feature type="binding site" evidence="1">
    <location>
        <position position="87"/>
    </location>
    <ligand>
        <name>Mg(2+)</name>
        <dbReference type="ChEBI" id="CHEBI:18420"/>
        <label>1</label>
    </ligand>
</feature>
<feature type="binding site" evidence="1">
    <location>
        <position position="103"/>
    </location>
    <ligand>
        <name>Mg(2+)</name>
        <dbReference type="ChEBI" id="CHEBI:18420"/>
        <label>1</label>
    </ligand>
</feature>
<feature type="binding site" evidence="1">
    <location>
        <position position="105"/>
    </location>
    <ligand>
        <name>Mg(2+)</name>
        <dbReference type="ChEBI" id="CHEBI:18420"/>
        <label>2</label>
    </ligand>
</feature>
<feature type="binding site" evidence="1">
    <location>
        <position position="107"/>
    </location>
    <ligand>
        <name>Mg(2+)</name>
        <dbReference type="ChEBI" id="CHEBI:18420"/>
        <label>1</label>
    </ligand>
</feature>
<feature type="binding site" evidence="1">
    <location>
        <position position="107"/>
    </location>
    <ligand>
        <name>Mg(2+)</name>
        <dbReference type="ChEBI" id="CHEBI:18420"/>
        <label>2</label>
    </ligand>
</feature>
<feature type="binding site" evidence="1">
    <location>
        <position position="120"/>
    </location>
    <ligand>
        <name>Mg(2+)</name>
        <dbReference type="ChEBI" id="CHEBI:18420"/>
        <label>2</label>
    </ligand>
</feature>
<feature type="binding site" evidence="1">
    <location>
        <position position="123"/>
    </location>
    <ligand>
        <name>Mg(2+)</name>
        <dbReference type="ChEBI" id="CHEBI:18420"/>
        <label>2</label>
    </ligand>
</feature>